<gene>
    <name type="primary">SUSD1</name>
    <name type="ORF">UNQ2438/PRO4999</name>
</gene>
<protein>
    <recommendedName>
        <fullName>Sushi domain-containing protein 1</fullName>
    </recommendedName>
</protein>
<proteinExistence type="evidence at protein level"/>
<keyword id="KW-0025">Alternative splicing</keyword>
<keyword id="KW-0106">Calcium</keyword>
<keyword id="KW-1015">Disulfide bond</keyword>
<keyword id="KW-0245">EGF-like domain</keyword>
<keyword id="KW-0325">Glycoprotein</keyword>
<keyword id="KW-0472">Membrane</keyword>
<keyword id="KW-1267">Proteomics identification</keyword>
<keyword id="KW-1185">Reference proteome</keyword>
<keyword id="KW-0677">Repeat</keyword>
<keyword id="KW-0732">Signal</keyword>
<keyword id="KW-0768">Sushi</keyword>
<keyword id="KW-0812">Transmembrane</keyword>
<keyword id="KW-1133">Transmembrane helix</keyword>
<feature type="signal peptide" evidence="2">
    <location>
        <begin position="1"/>
        <end position="29"/>
    </location>
</feature>
<feature type="chain" id="PRO_0000251972" description="Sushi domain-containing protein 1">
    <location>
        <begin position="30"/>
        <end position="747"/>
    </location>
</feature>
<feature type="topological domain" description="Extracellular" evidence="2">
    <location>
        <begin position="30"/>
        <end position="721"/>
    </location>
</feature>
<feature type="transmembrane region" description="Helical" evidence="2">
    <location>
        <begin position="722"/>
        <end position="742"/>
    </location>
</feature>
<feature type="topological domain" description="Cytoplasmic" evidence="2">
    <location>
        <begin position="743"/>
        <end position="747"/>
    </location>
</feature>
<feature type="domain" description="EGF-like 1" evidence="3">
    <location>
        <begin position="35"/>
        <end position="72"/>
    </location>
</feature>
<feature type="domain" description="EGF-like 2; calcium-binding" evidence="3">
    <location>
        <begin position="73"/>
        <end position="112"/>
    </location>
</feature>
<feature type="domain" description="EGF-like 3; calcium-binding" evidence="3">
    <location>
        <begin position="125"/>
        <end position="162"/>
    </location>
</feature>
<feature type="domain" description="Sushi 1" evidence="4">
    <location>
        <begin position="177"/>
        <end position="236"/>
    </location>
</feature>
<feature type="domain" description="Sushi 2" evidence="4">
    <location>
        <begin position="237"/>
        <end position="296"/>
    </location>
</feature>
<feature type="glycosylation site" description="N-linked (GlcNAc...) asparagine" evidence="2">
    <location>
        <position position="87"/>
    </location>
</feature>
<feature type="glycosylation site" description="N-linked (GlcNAc...) asparagine" evidence="2">
    <location>
        <position position="112"/>
    </location>
</feature>
<feature type="glycosylation site" description="N-linked (GlcNAc...) asparagine" evidence="2">
    <location>
        <position position="193"/>
    </location>
</feature>
<feature type="glycosylation site" description="N-linked (GlcNAc...) asparagine" evidence="6">
    <location>
        <position position="253"/>
    </location>
</feature>
<feature type="glycosylation site" description="N-linked (GlcNAc...) asparagine" evidence="2">
    <location>
        <position position="348"/>
    </location>
</feature>
<feature type="glycosylation site" description="N-linked (GlcNAc...) asparagine" evidence="2">
    <location>
        <position position="367"/>
    </location>
</feature>
<feature type="glycosylation site" description="N-linked (GlcNAc...) asparagine" evidence="2">
    <location>
        <position position="563"/>
    </location>
</feature>
<feature type="disulfide bond" evidence="1">
    <location>
        <begin position="39"/>
        <end position="48"/>
    </location>
</feature>
<feature type="disulfide bond" evidence="1">
    <location>
        <begin position="42"/>
        <end position="57"/>
    </location>
</feature>
<feature type="disulfide bond" evidence="1">
    <location>
        <begin position="59"/>
        <end position="71"/>
    </location>
</feature>
<feature type="disulfide bond" evidence="1">
    <location>
        <begin position="77"/>
        <end position="91"/>
    </location>
</feature>
<feature type="disulfide bond" evidence="1">
    <location>
        <begin position="85"/>
        <end position="100"/>
    </location>
</feature>
<feature type="disulfide bond" evidence="1">
    <location>
        <begin position="129"/>
        <end position="141"/>
    </location>
</feature>
<feature type="disulfide bond" evidence="1">
    <location>
        <begin position="135"/>
        <end position="150"/>
    </location>
</feature>
<feature type="disulfide bond" evidence="1">
    <location>
        <begin position="179"/>
        <end position="221"/>
    </location>
</feature>
<feature type="disulfide bond" evidence="1">
    <location>
        <begin position="206"/>
        <end position="234"/>
    </location>
</feature>
<feature type="disulfide bond" evidence="1">
    <location>
        <begin position="239"/>
        <end position="281"/>
    </location>
</feature>
<feature type="disulfide bond" evidence="1">
    <location>
        <begin position="266"/>
        <end position="294"/>
    </location>
</feature>
<feature type="splice variant" id="VSP_026677" description="In isoform 3." evidence="7">
    <original>VRRHSCAVWAQVKDSSLM</original>
    <variation>IRHSCCCRWRVLDWVPWL</variation>
    <location>
        <begin position="704"/>
        <end position="721"/>
    </location>
</feature>
<feature type="splice variant" id="VSP_020832" description="In isoform 2." evidence="8">
    <original>DSSLMLLQMAGVGLGSLAVVIILTFLSFSAV</original>
    <variation>EIPCNCNFLRLHIHRANSGDTQIRHSCCCRWRVLDWVPWLL</variation>
    <location>
        <begin position="717"/>
        <end position="747"/>
    </location>
</feature>
<feature type="sequence variant" id="VAR_051390" description="In dbSNP:rs17829458.">
    <original>Q</original>
    <variation>E</variation>
    <location>
        <position position="201"/>
    </location>
</feature>
<feature type="sequence variant" id="VAR_027743" description="In dbSNP:rs17855713." evidence="5">
    <original>H</original>
    <variation>Q</variation>
    <location>
        <position position="524"/>
    </location>
</feature>
<reference key="1">
    <citation type="journal article" date="2003" name="Genome Res.">
        <title>The secreted protein discovery initiative (SPDI), a large-scale effort to identify novel human secreted and transmembrane proteins: a bioinformatics assessment.</title>
        <authorList>
            <person name="Clark H.F."/>
            <person name="Gurney A.L."/>
            <person name="Abaya E."/>
            <person name="Baker K."/>
            <person name="Baldwin D.T."/>
            <person name="Brush J."/>
            <person name="Chen J."/>
            <person name="Chow B."/>
            <person name="Chui C."/>
            <person name="Crowley C."/>
            <person name="Currell B."/>
            <person name="Deuel B."/>
            <person name="Dowd P."/>
            <person name="Eaton D."/>
            <person name="Foster J.S."/>
            <person name="Grimaldi C."/>
            <person name="Gu Q."/>
            <person name="Hass P.E."/>
            <person name="Heldens S."/>
            <person name="Huang A."/>
            <person name="Kim H.S."/>
            <person name="Klimowski L."/>
            <person name="Jin Y."/>
            <person name="Johnson S."/>
            <person name="Lee J."/>
            <person name="Lewis L."/>
            <person name="Liao D."/>
            <person name="Mark M.R."/>
            <person name="Robbie E."/>
            <person name="Sanchez C."/>
            <person name="Schoenfeld J."/>
            <person name="Seshagiri S."/>
            <person name="Simmons L."/>
            <person name="Singh J."/>
            <person name="Smith V."/>
            <person name="Stinson J."/>
            <person name="Vagts A."/>
            <person name="Vandlen R.L."/>
            <person name="Watanabe C."/>
            <person name="Wieand D."/>
            <person name="Woods K."/>
            <person name="Xie M.-H."/>
            <person name="Yansura D.G."/>
            <person name="Yi S."/>
            <person name="Yu G."/>
            <person name="Yuan J."/>
            <person name="Zhang M."/>
            <person name="Zhang Z."/>
            <person name="Goddard A.D."/>
            <person name="Wood W.I."/>
            <person name="Godowski P.J."/>
            <person name="Gray A.M."/>
        </authorList>
    </citation>
    <scope>NUCLEOTIDE SEQUENCE [LARGE SCALE MRNA] (ISOFORM 1)</scope>
</reference>
<reference key="2">
    <citation type="journal article" date="2004" name="Nat. Genet.">
        <title>Complete sequencing and characterization of 21,243 full-length human cDNAs.</title>
        <authorList>
            <person name="Ota T."/>
            <person name="Suzuki Y."/>
            <person name="Nishikawa T."/>
            <person name="Otsuki T."/>
            <person name="Sugiyama T."/>
            <person name="Irie R."/>
            <person name="Wakamatsu A."/>
            <person name="Hayashi K."/>
            <person name="Sato H."/>
            <person name="Nagai K."/>
            <person name="Kimura K."/>
            <person name="Makita H."/>
            <person name="Sekine M."/>
            <person name="Obayashi M."/>
            <person name="Nishi T."/>
            <person name="Shibahara T."/>
            <person name="Tanaka T."/>
            <person name="Ishii S."/>
            <person name="Yamamoto J."/>
            <person name="Saito K."/>
            <person name="Kawai Y."/>
            <person name="Isono Y."/>
            <person name="Nakamura Y."/>
            <person name="Nagahari K."/>
            <person name="Murakami K."/>
            <person name="Yasuda T."/>
            <person name="Iwayanagi T."/>
            <person name="Wagatsuma M."/>
            <person name="Shiratori A."/>
            <person name="Sudo H."/>
            <person name="Hosoiri T."/>
            <person name="Kaku Y."/>
            <person name="Kodaira H."/>
            <person name="Kondo H."/>
            <person name="Sugawara M."/>
            <person name="Takahashi M."/>
            <person name="Kanda K."/>
            <person name="Yokoi T."/>
            <person name="Furuya T."/>
            <person name="Kikkawa E."/>
            <person name="Omura Y."/>
            <person name="Abe K."/>
            <person name="Kamihara K."/>
            <person name="Katsuta N."/>
            <person name="Sato K."/>
            <person name="Tanikawa M."/>
            <person name="Yamazaki M."/>
            <person name="Ninomiya K."/>
            <person name="Ishibashi T."/>
            <person name="Yamashita H."/>
            <person name="Murakawa K."/>
            <person name="Fujimori K."/>
            <person name="Tanai H."/>
            <person name="Kimata M."/>
            <person name="Watanabe M."/>
            <person name="Hiraoka S."/>
            <person name="Chiba Y."/>
            <person name="Ishida S."/>
            <person name="Ono Y."/>
            <person name="Takiguchi S."/>
            <person name="Watanabe S."/>
            <person name="Yosida M."/>
            <person name="Hotuta T."/>
            <person name="Kusano J."/>
            <person name="Kanehori K."/>
            <person name="Takahashi-Fujii A."/>
            <person name="Hara H."/>
            <person name="Tanase T.-O."/>
            <person name="Nomura Y."/>
            <person name="Togiya S."/>
            <person name="Komai F."/>
            <person name="Hara R."/>
            <person name="Takeuchi K."/>
            <person name="Arita M."/>
            <person name="Imose N."/>
            <person name="Musashino K."/>
            <person name="Yuuki H."/>
            <person name="Oshima A."/>
            <person name="Sasaki N."/>
            <person name="Aotsuka S."/>
            <person name="Yoshikawa Y."/>
            <person name="Matsunawa H."/>
            <person name="Ichihara T."/>
            <person name="Shiohata N."/>
            <person name="Sano S."/>
            <person name="Moriya S."/>
            <person name="Momiyama H."/>
            <person name="Satoh N."/>
            <person name="Takami S."/>
            <person name="Terashima Y."/>
            <person name="Suzuki O."/>
            <person name="Nakagawa S."/>
            <person name="Senoh A."/>
            <person name="Mizoguchi H."/>
            <person name="Goto Y."/>
            <person name="Shimizu F."/>
            <person name="Wakebe H."/>
            <person name="Hishigaki H."/>
            <person name="Watanabe T."/>
            <person name="Sugiyama A."/>
            <person name="Takemoto M."/>
            <person name="Kawakami B."/>
            <person name="Yamazaki M."/>
            <person name="Watanabe K."/>
            <person name="Kumagai A."/>
            <person name="Itakura S."/>
            <person name="Fukuzumi Y."/>
            <person name="Fujimori Y."/>
            <person name="Komiyama M."/>
            <person name="Tashiro H."/>
            <person name="Tanigami A."/>
            <person name="Fujiwara T."/>
            <person name="Ono T."/>
            <person name="Yamada K."/>
            <person name="Fujii Y."/>
            <person name="Ozaki K."/>
            <person name="Hirao M."/>
            <person name="Ohmori Y."/>
            <person name="Kawabata A."/>
            <person name="Hikiji T."/>
            <person name="Kobatake N."/>
            <person name="Inagaki H."/>
            <person name="Ikema Y."/>
            <person name="Okamoto S."/>
            <person name="Okitani R."/>
            <person name="Kawakami T."/>
            <person name="Noguchi S."/>
            <person name="Itoh T."/>
            <person name="Shigeta K."/>
            <person name="Senba T."/>
            <person name="Matsumura K."/>
            <person name="Nakajima Y."/>
            <person name="Mizuno T."/>
            <person name="Morinaga M."/>
            <person name="Sasaki M."/>
            <person name="Togashi T."/>
            <person name="Oyama M."/>
            <person name="Hata H."/>
            <person name="Watanabe M."/>
            <person name="Komatsu T."/>
            <person name="Mizushima-Sugano J."/>
            <person name="Satoh T."/>
            <person name="Shirai Y."/>
            <person name="Takahashi Y."/>
            <person name="Nakagawa K."/>
            <person name="Okumura K."/>
            <person name="Nagase T."/>
            <person name="Nomura N."/>
            <person name="Kikuchi H."/>
            <person name="Masuho Y."/>
            <person name="Yamashita R."/>
            <person name="Nakai K."/>
            <person name="Yada T."/>
            <person name="Nakamura Y."/>
            <person name="Ohara O."/>
            <person name="Isogai T."/>
            <person name="Sugano S."/>
        </authorList>
    </citation>
    <scope>NUCLEOTIDE SEQUENCE [LARGE SCALE MRNA] (ISOFORMS 1 AND 3)</scope>
    <scope>NUCLEOTIDE SEQUENCE [LARGE SCALE MRNA] OF 308-747 (ISOFORM 1)</scope>
    <source>
        <tissue>Trachea</tissue>
    </source>
</reference>
<reference key="3">
    <citation type="journal article" date="2004" name="Nature">
        <title>DNA sequence and analysis of human chromosome 9.</title>
        <authorList>
            <person name="Humphray S.J."/>
            <person name="Oliver K."/>
            <person name="Hunt A.R."/>
            <person name="Plumb R.W."/>
            <person name="Loveland J.E."/>
            <person name="Howe K.L."/>
            <person name="Andrews T.D."/>
            <person name="Searle S."/>
            <person name="Hunt S.E."/>
            <person name="Scott C.E."/>
            <person name="Jones M.C."/>
            <person name="Ainscough R."/>
            <person name="Almeida J.P."/>
            <person name="Ambrose K.D."/>
            <person name="Ashwell R.I.S."/>
            <person name="Babbage A.K."/>
            <person name="Babbage S."/>
            <person name="Bagguley C.L."/>
            <person name="Bailey J."/>
            <person name="Banerjee R."/>
            <person name="Barker D.J."/>
            <person name="Barlow K.F."/>
            <person name="Bates K."/>
            <person name="Beasley H."/>
            <person name="Beasley O."/>
            <person name="Bird C.P."/>
            <person name="Bray-Allen S."/>
            <person name="Brown A.J."/>
            <person name="Brown J.Y."/>
            <person name="Burford D."/>
            <person name="Burrill W."/>
            <person name="Burton J."/>
            <person name="Carder C."/>
            <person name="Carter N.P."/>
            <person name="Chapman J.C."/>
            <person name="Chen Y."/>
            <person name="Clarke G."/>
            <person name="Clark S.Y."/>
            <person name="Clee C.M."/>
            <person name="Clegg S."/>
            <person name="Collier R.E."/>
            <person name="Corby N."/>
            <person name="Crosier M."/>
            <person name="Cummings A.T."/>
            <person name="Davies J."/>
            <person name="Dhami P."/>
            <person name="Dunn M."/>
            <person name="Dutta I."/>
            <person name="Dyer L.W."/>
            <person name="Earthrowl M.E."/>
            <person name="Faulkner L."/>
            <person name="Fleming C.J."/>
            <person name="Frankish A."/>
            <person name="Frankland J.A."/>
            <person name="French L."/>
            <person name="Fricker D.G."/>
            <person name="Garner P."/>
            <person name="Garnett J."/>
            <person name="Ghori J."/>
            <person name="Gilbert J.G.R."/>
            <person name="Glison C."/>
            <person name="Grafham D.V."/>
            <person name="Gribble S."/>
            <person name="Griffiths C."/>
            <person name="Griffiths-Jones S."/>
            <person name="Grocock R."/>
            <person name="Guy J."/>
            <person name="Hall R.E."/>
            <person name="Hammond S."/>
            <person name="Harley J.L."/>
            <person name="Harrison E.S.I."/>
            <person name="Hart E.A."/>
            <person name="Heath P.D."/>
            <person name="Henderson C.D."/>
            <person name="Hopkins B.L."/>
            <person name="Howard P.J."/>
            <person name="Howden P.J."/>
            <person name="Huckle E."/>
            <person name="Johnson C."/>
            <person name="Johnson D."/>
            <person name="Joy A.A."/>
            <person name="Kay M."/>
            <person name="Keenan S."/>
            <person name="Kershaw J.K."/>
            <person name="Kimberley A.M."/>
            <person name="King A."/>
            <person name="Knights A."/>
            <person name="Laird G.K."/>
            <person name="Langford C."/>
            <person name="Lawlor S."/>
            <person name="Leongamornlert D.A."/>
            <person name="Leversha M."/>
            <person name="Lloyd C."/>
            <person name="Lloyd D.M."/>
            <person name="Lovell J."/>
            <person name="Martin S."/>
            <person name="Mashreghi-Mohammadi M."/>
            <person name="Matthews L."/>
            <person name="McLaren S."/>
            <person name="McLay K.E."/>
            <person name="McMurray A."/>
            <person name="Milne S."/>
            <person name="Nickerson T."/>
            <person name="Nisbett J."/>
            <person name="Nordsiek G."/>
            <person name="Pearce A.V."/>
            <person name="Peck A.I."/>
            <person name="Porter K.M."/>
            <person name="Pandian R."/>
            <person name="Pelan S."/>
            <person name="Phillimore B."/>
            <person name="Povey S."/>
            <person name="Ramsey Y."/>
            <person name="Rand V."/>
            <person name="Scharfe M."/>
            <person name="Sehra H.K."/>
            <person name="Shownkeen R."/>
            <person name="Sims S.K."/>
            <person name="Skuce C.D."/>
            <person name="Smith M."/>
            <person name="Steward C.A."/>
            <person name="Swarbreck D."/>
            <person name="Sycamore N."/>
            <person name="Tester J."/>
            <person name="Thorpe A."/>
            <person name="Tracey A."/>
            <person name="Tromans A."/>
            <person name="Thomas D.W."/>
            <person name="Wall M."/>
            <person name="Wallis J.M."/>
            <person name="West A.P."/>
            <person name="Whitehead S.L."/>
            <person name="Willey D.L."/>
            <person name="Williams S.A."/>
            <person name="Wilming L."/>
            <person name="Wray P.W."/>
            <person name="Young L."/>
            <person name="Ashurst J.L."/>
            <person name="Coulson A."/>
            <person name="Blocker H."/>
            <person name="Durbin R.M."/>
            <person name="Sulston J.E."/>
            <person name="Hubbard T."/>
            <person name="Jackson M.J."/>
            <person name="Bentley D.R."/>
            <person name="Beck S."/>
            <person name="Rogers J."/>
            <person name="Dunham I."/>
        </authorList>
    </citation>
    <scope>NUCLEOTIDE SEQUENCE [LARGE SCALE GENOMIC DNA]</scope>
</reference>
<reference key="4">
    <citation type="submission" date="2005-07" db="EMBL/GenBank/DDBJ databases">
        <authorList>
            <person name="Mural R.J."/>
            <person name="Istrail S."/>
            <person name="Sutton G.G."/>
            <person name="Florea L."/>
            <person name="Halpern A.L."/>
            <person name="Mobarry C.M."/>
            <person name="Lippert R."/>
            <person name="Walenz B."/>
            <person name="Shatkay H."/>
            <person name="Dew I."/>
            <person name="Miller J.R."/>
            <person name="Flanigan M.J."/>
            <person name="Edwards N.J."/>
            <person name="Bolanos R."/>
            <person name="Fasulo D."/>
            <person name="Halldorsson B.V."/>
            <person name="Hannenhalli S."/>
            <person name="Turner R."/>
            <person name="Yooseph S."/>
            <person name="Lu F."/>
            <person name="Nusskern D.R."/>
            <person name="Shue B.C."/>
            <person name="Zheng X.H."/>
            <person name="Zhong F."/>
            <person name="Delcher A.L."/>
            <person name="Huson D.H."/>
            <person name="Kravitz S.A."/>
            <person name="Mouchard L."/>
            <person name="Reinert K."/>
            <person name="Remington K.A."/>
            <person name="Clark A.G."/>
            <person name="Waterman M.S."/>
            <person name="Eichler E.E."/>
            <person name="Adams M.D."/>
            <person name="Hunkapiller M.W."/>
            <person name="Myers E.W."/>
            <person name="Venter J.C."/>
        </authorList>
    </citation>
    <scope>NUCLEOTIDE SEQUENCE [LARGE SCALE GENOMIC DNA]</scope>
</reference>
<reference key="5">
    <citation type="journal article" date="2004" name="Genome Res.">
        <title>The status, quality, and expansion of the NIH full-length cDNA project: the Mammalian Gene Collection (MGC).</title>
        <authorList>
            <consortium name="The MGC Project Team"/>
        </authorList>
    </citation>
    <scope>NUCLEOTIDE SEQUENCE [LARGE SCALE MRNA] (ISOFORM 2)</scope>
    <scope>NUCLEOTIDE SEQUENCE [LARGE SCALE MRNA] OF 403-747 (ISOFORM 1)</scope>
    <scope>VARIANT GLN-524</scope>
    <source>
        <tissue>Placenta</tissue>
    </source>
</reference>
<reference key="6">
    <citation type="journal article" date="2007" name="BMC Genomics">
        <title>The full-ORF clone resource of the German cDNA consortium.</title>
        <authorList>
            <person name="Bechtel S."/>
            <person name="Rosenfelder H."/>
            <person name="Duda A."/>
            <person name="Schmidt C.P."/>
            <person name="Ernst U."/>
            <person name="Wellenreuther R."/>
            <person name="Mehrle A."/>
            <person name="Schuster C."/>
            <person name="Bahr A."/>
            <person name="Bloecker H."/>
            <person name="Heubner D."/>
            <person name="Hoerlein A."/>
            <person name="Michel G."/>
            <person name="Wedler H."/>
            <person name="Koehrer K."/>
            <person name="Ottenwaelder B."/>
            <person name="Poustka A."/>
            <person name="Wiemann S."/>
            <person name="Schupp I."/>
        </authorList>
    </citation>
    <scope>NUCLEOTIDE SEQUENCE [LARGE SCALE MRNA] OF 178-747 (ISOFORM 1)</scope>
    <source>
        <tissue>Amygdala</tissue>
    </source>
</reference>
<reference key="7">
    <citation type="journal article" date="2006" name="Mol. Cell. Proteomics">
        <title>Elucidation of N-glycosylation sites on human platelet proteins: a glycoproteomic approach.</title>
        <authorList>
            <person name="Lewandrowski U."/>
            <person name="Moebius J."/>
            <person name="Walter U."/>
            <person name="Sickmann A."/>
        </authorList>
    </citation>
    <scope>GLYCOSYLATION [LARGE SCALE ANALYSIS] AT ASN-253</scope>
    <source>
        <tissue>Platelet</tissue>
    </source>
</reference>
<organism>
    <name type="scientific">Homo sapiens</name>
    <name type="common">Human</name>
    <dbReference type="NCBI Taxonomy" id="9606"/>
    <lineage>
        <taxon>Eukaryota</taxon>
        <taxon>Metazoa</taxon>
        <taxon>Chordata</taxon>
        <taxon>Craniata</taxon>
        <taxon>Vertebrata</taxon>
        <taxon>Euteleostomi</taxon>
        <taxon>Mammalia</taxon>
        <taxon>Eutheria</taxon>
        <taxon>Euarchontoglires</taxon>
        <taxon>Primates</taxon>
        <taxon>Haplorrhini</taxon>
        <taxon>Catarrhini</taxon>
        <taxon>Hominidae</taxon>
        <taxon>Homo</taxon>
    </lineage>
</organism>
<name>SUSD1_HUMAN</name>
<comment type="subcellular location">
    <subcellularLocation>
        <location evidence="9">Membrane</location>
        <topology evidence="9">Single-pass type I membrane protein</topology>
    </subcellularLocation>
</comment>
<comment type="alternative products">
    <event type="alternative splicing"/>
    <isoform>
        <id>Q6UWL2-1</id>
        <name>1</name>
        <sequence type="displayed"/>
    </isoform>
    <isoform>
        <id>Q6UWL2-2</id>
        <name>2</name>
        <sequence type="described" ref="VSP_020832"/>
    </isoform>
    <isoform>
        <id>Q6UWL2-3</id>
        <name>3</name>
        <sequence type="described" ref="VSP_026677"/>
    </isoform>
</comment>
<comment type="sequence caution" evidence="9">
    <conflict type="erroneous initiation">
        <sequence resource="EMBL-CDS" id="BAB15149"/>
    </conflict>
    <text>Truncated N-terminus.</text>
</comment>
<comment type="sequence caution" evidence="9">
    <conflict type="erroneous initiation">
        <sequence resource="EMBL-CDS" id="BAB71259"/>
    </conflict>
    <text>Truncated N-terminus.</text>
</comment>
<evidence type="ECO:0000250" key="1"/>
<evidence type="ECO:0000255" key="2"/>
<evidence type="ECO:0000255" key="3">
    <source>
        <dbReference type="PROSITE-ProRule" id="PRU00076"/>
    </source>
</evidence>
<evidence type="ECO:0000255" key="4">
    <source>
        <dbReference type="PROSITE-ProRule" id="PRU00302"/>
    </source>
</evidence>
<evidence type="ECO:0000269" key="5">
    <source>
    </source>
</evidence>
<evidence type="ECO:0000269" key="6">
    <source>
    </source>
</evidence>
<evidence type="ECO:0000303" key="7">
    <source>
    </source>
</evidence>
<evidence type="ECO:0000303" key="8">
    <source>
    </source>
</evidence>
<evidence type="ECO:0000305" key="9"/>
<accession>Q6UWL2</accession>
<accession>A1A4C5</accession>
<accession>A8KA03</accession>
<accession>Q5T8V6</accession>
<accession>Q5T8V7</accession>
<accession>Q6P9G7</accession>
<accession>Q8WU83</accession>
<accession>Q96DM9</accession>
<accession>Q9H6V2</accession>
<accession>Q9NTA7</accession>
<dbReference type="EMBL" id="AY358746">
    <property type="protein sequence ID" value="AAQ89106.1"/>
    <property type="molecule type" value="mRNA"/>
</dbReference>
<dbReference type="EMBL" id="AK025486">
    <property type="protein sequence ID" value="BAB15149.1"/>
    <property type="status" value="ALT_INIT"/>
    <property type="molecule type" value="mRNA"/>
</dbReference>
<dbReference type="EMBL" id="AK056704">
    <property type="protein sequence ID" value="BAB71259.1"/>
    <property type="status" value="ALT_INIT"/>
    <property type="molecule type" value="mRNA"/>
</dbReference>
<dbReference type="EMBL" id="AK292868">
    <property type="protein sequence ID" value="BAF85557.1"/>
    <property type="molecule type" value="mRNA"/>
</dbReference>
<dbReference type="EMBL" id="AL138756">
    <property type="status" value="NOT_ANNOTATED_CDS"/>
    <property type="molecule type" value="Genomic_DNA"/>
</dbReference>
<dbReference type="EMBL" id="AL158824">
    <property type="status" value="NOT_ANNOTATED_CDS"/>
    <property type="molecule type" value="Genomic_DNA"/>
</dbReference>
<dbReference type="EMBL" id="CH471105">
    <property type="protein sequence ID" value="EAW59093.1"/>
    <property type="molecule type" value="Genomic_DNA"/>
</dbReference>
<dbReference type="EMBL" id="BC021125">
    <property type="protein sequence ID" value="AAH21125.1"/>
    <property type="molecule type" value="mRNA"/>
</dbReference>
<dbReference type="EMBL" id="BC052314">
    <property type="protein sequence ID" value="AAH52314.1"/>
    <property type="molecule type" value="mRNA"/>
</dbReference>
<dbReference type="EMBL" id="BC060770">
    <property type="protein sequence ID" value="AAH60770.2"/>
    <property type="molecule type" value="mRNA"/>
</dbReference>
<dbReference type="EMBL" id="AL137432">
    <property type="protein sequence ID" value="CAB70735.1"/>
    <property type="molecule type" value="mRNA"/>
</dbReference>
<dbReference type="CCDS" id="CCDS65106.1">
    <molecule id="Q6UWL2-2"/>
</dbReference>
<dbReference type="CCDS" id="CCDS6783.1">
    <molecule id="Q6UWL2-1"/>
</dbReference>
<dbReference type="PIR" id="T46261">
    <property type="entry name" value="T46261"/>
</dbReference>
<dbReference type="RefSeq" id="NP_001269569.1">
    <molecule id="Q6UWL2-2"/>
    <property type="nucleotide sequence ID" value="NM_001282640.2"/>
</dbReference>
<dbReference type="RefSeq" id="NP_001269572.1">
    <property type="nucleotide sequence ID" value="NM_001282643.1"/>
</dbReference>
<dbReference type="RefSeq" id="NP_071931.2">
    <molecule id="Q6UWL2-1"/>
    <property type="nucleotide sequence ID" value="NM_022486.4"/>
</dbReference>
<dbReference type="SMR" id="Q6UWL2"/>
<dbReference type="BioGRID" id="122169">
    <property type="interactions" value="39"/>
</dbReference>
<dbReference type="FunCoup" id="Q6UWL2">
    <property type="interactions" value="440"/>
</dbReference>
<dbReference type="IntAct" id="Q6UWL2">
    <property type="interactions" value="33"/>
</dbReference>
<dbReference type="MINT" id="Q6UWL2"/>
<dbReference type="STRING" id="9606.ENSP00000363382"/>
<dbReference type="GlyCosmos" id="Q6UWL2">
    <property type="glycosylation" value="7 sites, No reported glycans"/>
</dbReference>
<dbReference type="GlyGen" id="Q6UWL2">
    <property type="glycosylation" value="14 sites, 9 N-linked glycans (10 sites), 1 O-linked glycan (1 site)"/>
</dbReference>
<dbReference type="iPTMnet" id="Q6UWL2"/>
<dbReference type="PhosphoSitePlus" id="Q6UWL2"/>
<dbReference type="BioMuta" id="SUSD1"/>
<dbReference type="DMDM" id="74749394"/>
<dbReference type="jPOST" id="Q6UWL2"/>
<dbReference type="MassIVE" id="Q6UWL2"/>
<dbReference type="PaxDb" id="9606-ENSP00000363382"/>
<dbReference type="PeptideAtlas" id="Q6UWL2"/>
<dbReference type="ProteomicsDB" id="67490">
    <molecule id="Q6UWL2-1"/>
</dbReference>
<dbReference type="ProteomicsDB" id="67491">
    <molecule id="Q6UWL2-2"/>
</dbReference>
<dbReference type="ProteomicsDB" id="67492">
    <molecule id="Q6UWL2-3"/>
</dbReference>
<dbReference type="Antibodypedia" id="62398">
    <property type="antibodies" value="15 antibodies from 9 providers"/>
</dbReference>
<dbReference type="DNASU" id="64420"/>
<dbReference type="Ensembl" id="ENST00000374264.6">
    <molecule id="Q6UWL2-2"/>
    <property type="protein sequence ID" value="ENSP00000363382.2"/>
    <property type="gene ID" value="ENSG00000106868.17"/>
</dbReference>
<dbReference type="Ensembl" id="ENST00000374270.8">
    <molecule id="Q6UWL2-1"/>
    <property type="protein sequence ID" value="ENSP00000363388.4"/>
    <property type="gene ID" value="ENSG00000106868.17"/>
</dbReference>
<dbReference type="GeneID" id="64420"/>
<dbReference type="KEGG" id="hsa:64420"/>
<dbReference type="MANE-Select" id="ENST00000374270.8">
    <property type="protein sequence ID" value="ENSP00000363388.4"/>
    <property type="RefSeq nucleotide sequence ID" value="NM_022486.5"/>
    <property type="RefSeq protein sequence ID" value="NP_071931.2"/>
</dbReference>
<dbReference type="UCSC" id="uc004bfu.5">
    <molecule id="Q6UWL2-1"/>
    <property type="organism name" value="human"/>
</dbReference>
<dbReference type="AGR" id="HGNC:25413"/>
<dbReference type="CTD" id="64420"/>
<dbReference type="DisGeNET" id="64420"/>
<dbReference type="GeneCards" id="SUSD1"/>
<dbReference type="HGNC" id="HGNC:25413">
    <property type="gene designation" value="SUSD1"/>
</dbReference>
<dbReference type="HPA" id="ENSG00000106868">
    <property type="expression patterns" value="Low tissue specificity"/>
</dbReference>
<dbReference type="neXtProt" id="NX_Q6UWL2"/>
<dbReference type="OpenTargets" id="ENSG00000106868"/>
<dbReference type="PharmGKB" id="PA134935587"/>
<dbReference type="VEuPathDB" id="HostDB:ENSG00000106868"/>
<dbReference type="eggNOG" id="KOG1217">
    <property type="taxonomic scope" value="Eukaryota"/>
</dbReference>
<dbReference type="GeneTree" id="ENSGT00390000013892"/>
<dbReference type="InParanoid" id="Q6UWL2"/>
<dbReference type="OMA" id="TCLRWQI"/>
<dbReference type="OrthoDB" id="9943809at2759"/>
<dbReference type="PAN-GO" id="Q6UWL2">
    <property type="GO annotations" value="0 GO annotations based on evolutionary models"/>
</dbReference>
<dbReference type="PhylomeDB" id="Q6UWL2"/>
<dbReference type="TreeFam" id="TF335742"/>
<dbReference type="PathwayCommons" id="Q6UWL2"/>
<dbReference type="SignaLink" id="Q6UWL2"/>
<dbReference type="BioGRID-ORCS" id="64420">
    <property type="hits" value="10 hits in 1156 CRISPR screens"/>
</dbReference>
<dbReference type="ChiTaRS" id="SUSD1">
    <property type="organism name" value="human"/>
</dbReference>
<dbReference type="GenomeRNAi" id="64420"/>
<dbReference type="Pharos" id="Q6UWL2">
    <property type="development level" value="Tdark"/>
</dbReference>
<dbReference type="PRO" id="PR:Q6UWL2"/>
<dbReference type="Proteomes" id="UP000005640">
    <property type="component" value="Chromosome 9"/>
</dbReference>
<dbReference type="RNAct" id="Q6UWL2">
    <property type="molecule type" value="protein"/>
</dbReference>
<dbReference type="Bgee" id="ENSG00000106868">
    <property type="expression patterns" value="Expressed in monocyte and 137 other cell types or tissues"/>
</dbReference>
<dbReference type="ExpressionAtlas" id="Q6UWL2">
    <property type="expression patterns" value="baseline and differential"/>
</dbReference>
<dbReference type="GO" id="GO:0016020">
    <property type="term" value="C:membrane"/>
    <property type="evidence" value="ECO:0007669"/>
    <property type="project" value="UniProtKB-SubCell"/>
</dbReference>
<dbReference type="GO" id="GO:0005509">
    <property type="term" value="F:calcium ion binding"/>
    <property type="evidence" value="ECO:0007669"/>
    <property type="project" value="InterPro"/>
</dbReference>
<dbReference type="CDD" id="cd00033">
    <property type="entry name" value="CCP"/>
    <property type="match status" value="2"/>
</dbReference>
<dbReference type="CDD" id="cd00054">
    <property type="entry name" value="EGF_CA"/>
    <property type="match status" value="2"/>
</dbReference>
<dbReference type="FunFam" id="2.10.25.10:FF:000038">
    <property type="entry name" value="Fibrillin 2"/>
    <property type="match status" value="1"/>
</dbReference>
<dbReference type="Gene3D" id="2.10.70.10">
    <property type="entry name" value="Complement Module, domain 1"/>
    <property type="match status" value="2"/>
</dbReference>
<dbReference type="Gene3D" id="2.10.25.10">
    <property type="entry name" value="Laminin"/>
    <property type="match status" value="3"/>
</dbReference>
<dbReference type="InterPro" id="IPR001881">
    <property type="entry name" value="EGF-like_Ca-bd_dom"/>
</dbReference>
<dbReference type="InterPro" id="IPR000742">
    <property type="entry name" value="EGF-like_dom"/>
</dbReference>
<dbReference type="InterPro" id="IPR000152">
    <property type="entry name" value="EGF-type_Asp/Asn_hydroxyl_site"/>
</dbReference>
<dbReference type="InterPro" id="IPR018097">
    <property type="entry name" value="EGF_Ca-bd_CS"/>
</dbReference>
<dbReference type="InterPro" id="IPR009030">
    <property type="entry name" value="Growth_fac_rcpt_cys_sf"/>
</dbReference>
<dbReference type="InterPro" id="IPR049883">
    <property type="entry name" value="NOTCH1_EGF-like"/>
</dbReference>
<dbReference type="InterPro" id="IPR051622">
    <property type="entry name" value="R-tyr_protein_phosphatases"/>
</dbReference>
<dbReference type="InterPro" id="IPR035976">
    <property type="entry name" value="Sushi/SCR/CCP_sf"/>
</dbReference>
<dbReference type="InterPro" id="IPR000436">
    <property type="entry name" value="Sushi_SCR_CCP_dom"/>
</dbReference>
<dbReference type="PANTHER" id="PTHR24051">
    <property type="entry name" value="SUSHI DOMAIN-CONTAINING PROTEIN 1"/>
    <property type="match status" value="1"/>
</dbReference>
<dbReference type="PANTHER" id="PTHR24051:SF5">
    <property type="entry name" value="SUSHI DOMAIN-CONTAINING PROTEIN 1"/>
    <property type="match status" value="1"/>
</dbReference>
<dbReference type="Pfam" id="PF07645">
    <property type="entry name" value="EGF_CA"/>
    <property type="match status" value="2"/>
</dbReference>
<dbReference type="Pfam" id="PF23144">
    <property type="entry name" value="Fn3_PTPRU"/>
    <property type="match status" value="1"/>
</dbReference>
<dbReference type="Pfam" id="PF00084">
    <property type="entry name" value="Sushi"/>
    <property type="match status" value="2"/>
</dbReference>
<dbReference type="SMART" id="SM00032">
    <property type="entry name" value="CCP"/>
    <property type="match status" value="2"/>
</dbReference>
<dbReference type="SMART" id="SM00181">
    <property type="entry name" value="EGF"/>
    <property type="match status" value="3"/>
</dbReference>
<dbReference type="SMART" id="SM00179">
    <property type="entry name" value="EGF_CA"/>
    <property type="match status" value="2"/>
</dbReference>
<dbReference type="SUPFAM" id="SSF57535">
    <property type="entry name" value="Complement control module/SCR domain"/>
    <property type="match status" value="2"/>
</dbReference>
<dbReference type="SUPFAM" id="SSF57184">
    <property type="entry name" value="Growth factor receptor domain"/>
    <property type="match status" value="1"/>
</dbReference>
<dbReference type="PROSITE" id="PS00010">
    <property type="entry name" value="ASX_HYDROXYL"/>
    <property type="match status" value="2"/>
</dbReference>
<dbReference type="PROSITE" id="PS01186">
    <property type="entry name" value="EGF_2"/>
    <property type="match status" value="1"/>
</dbReference>
<dbReference type="PROSITE" id="PS50026">
    <property type="entry name" value="EGF_3"/>
    <property type="match status" value="3"/>
</dbReference>
<dbReference type="PROSITE" id="PS01187">
    <property type="entry name" value="EGF_CA"/>
    <property type="match status" value="2"/>
</dbReference>
<dbReference type="PROSITE" id="PS50923">
    <property type="entry name" value="SUSHI"/>
    <property type="match status" value="2"/>
</dbReference>
<sequence length="747" mass="82710">MGRGPWDAGPSRRLLPLLLLLGLARGAAGAPGPDGLDVCATCHEHATCQQREGKKICICNYGFVGNGRTQCVDKNECQFGATLVCGNHTSCHNTPGGFYCICLEGYRATNNNKTFIPNDGTFCTDIDECEVSGLCRHGGRCVNTHGSFECYCMDGYLPRNGPEPFHPTTDATSCTEIDCGTPPEVPDGYIIGNYTSSLGSQVRYACREGFFSVPEDTVSSCTGLGTWESPKLHCQEINCGNPPEMRHAILVGNHSSRLGGVARYVCQEGFESPGGKITSVCTEKGTWRESTLTCTEILTKINDVSLFNDTCVRWQINSRRINPKISYVISIKGQRLDPMESVREETVNLTTDSRTPEVCLALYPGTNYTVNISTAPPRRSMPAVIGFQTAEVDLLEDDGSFNISIFNETCLKLNRRSRKVGSEHMYQFTVLGQRWYLANFSHATSFNFTTREQVPVVCLDLYPTTDYTVNVTLLRSPKRHSVQITIATPPAVKQTISNISGFNETCLRWRSIKTADMEEMYLFHIWGQRWYQKEFAQEMTFNISSSSRDPEVCLDLRPGTNYNVSLRALSSELPVVISLTTQITEPPLPEVEFFTVHRGPLPRLRLRKAKEKNGPISSYQVLVLPLALQSTFSCDSEGASSFFSNASDADGYVAAELLAKDVPDDAMEIPIGDRLYYGEYYNAPLKRGSDYCIILRITSEWNKVRRHSCAVWAQVKDSSLMLLQMAGVGLGSLAVVIILTFLSFSAV</sequence>